<name>GLUQ_PSEU2</name>
<keyword id="KW-0030">Aminoacyl-tRNA synthetase</keyword>
<keyword id="KW-0067">ATP-binding</keyword>
<keyword id="KW-0436">Ligase</keyword>
<keyword id="KW-0479">Metal-binding</keyword>
<keyword id="KW-0547">Nucleotide-binding</keyword>
<keyword id="KW-0862">Zinc</keyword>
<organism>
    <name type="scientific">Pseudomonas syringae pv. syringae (strain B728a)</name>
    <dbReference type="NCBI Taxonomy" id="205918"/>
    <lineage>
        <taxon>Bacteria</taxon>
        <taxon>Pseudomonadati</taxon>
        <taxon>Pseudomonadota</taxon>
        <taxon>Gammaproteobacteria</taxon>
        <taxon>Pseudomonadales</taxon>
        <taxon>Pseudomonadaceae</taxon>
        <taxon>Pseudomonas</taxon>
        <taxon>Pseudomonas syringae</taxon>
    </lineage>
</organism>
<evidence type="ECO:0000255" key="1">
    <source>
        <dbReference type="HAMAP-Rule" id="MF_01428"/>
    </source>
</evidence>
<sequence length="295" mass="33285">MKKPACIGRFAPTPSGYLHFGSLVAALASYLDARAADGQWLLRMEDLDPPREVAGAQAGILETLERYGFEWDGQMVRQSERHDAYAEILQRWFNHGLAYACTCSRKQLEGFQGIYPGFCRNAGHSPDNAAIRIRVPELEYRFDDRVQGTFKMHLGRESGDFVIRRRDGLYAYQLAVVIDDAWQGVTDIVRGADLLDSTPRQLYLQELLGLPQPRYLHVPLITQPDGHKLGKSYRSPPLPADQATPLLLRALRALGQPLDTHMADGTAQEVLAWGIRHWNADLIPRLRNIEEARID</sequence>
<protein>
    <recommendedName>
        <fullName evidence="1">Glutamyl-Q tRNA(Asp) synthetase</fullName>
        <shortName evidence="1">Glu-Q-RSs</shortName>
        <ecNumber evidence="1">6.1.1.-</ecNumber>
    </recommendedName>
</protein>
<feature type="chain" id="PRO_0000208317" description="Glutamyl-Q tRNA(Asp) synthetase">
    <location>
        <begin position="1"/>
        <end position="295"/>
    </location>
</feature>
<feature type="short sequence motif" description="'HIGH' region">
    <location>
        <begin position="12"/>
        <end position="22"/>
    </location>
</feature>
<feature type="short sequence motif" description="'KMSKS' region">
    <location>
        <begin position="228"/>
        <end position="232"/>
    </location>
</feature>
<feature type="binding site" evidence="1">
    <location>
        <begin position="9"/>
        <end position="13"/>
    </location>
    <ligand>
        <name>L-glutamate</name>
        <dbReference type="ChEBI" id="CHEBI:29985"/>
    </ligand>
</feature>
<feature type="binding site" evidence="1">
    <location>
        <position position="45"/>
    </location>
    <ligand>
        <name>L-glutamate</name>
        <dbReference type="ChEBI" id="CHEBI:29985"/>
    </ligand>
</feature>
<feature type="binding site" evidence="1">
    <location>
        <position position="101"/>
    </location>
    <ligand>
        <name>Zn(2+)</name>
        <dbReference type="ChEBI" id="CHEBI:29105"/>
    </ligand>
</feature>
<feature type="binding site" evidence="1">
    <location>
        <position position="103"/>
    </location>
    <ligand>
        <name>Zn(2+)</name>
        <dbReference type="ChEBI" id="CHEBI:29105"/>
    </ligand>
</feature>
<feature type="binding site" evidence="1">
    <location>
        <position position="115"/>
    </location>
    <ligand>
        <name>Zn(2+)</name>
        <dbReference type="ChEBI" id="CHEBI:29105"/>
    </ligand>
</feature>
<feature type="binding site" evidence="1">
    <location>
        <position position="119"/>
    </location>
    <ligand>
        <name>Zn(2+)</name>
        <dbReference type="ChEBI" id="CHEBI:29105"/>
    </ligand>
</feature>
<feature type="binding site" evidence="1">
    <location>
        <position position="172"/>
    </location>
    <ligand>
        <name>L-glutamate</name>
        <dbReference type="ChEBI" id="CHEBI:29985"/>
    </ligand>
</feature>
<feature type="binding site" evidence="1">
    <location>
        <position position="190"/>
    </location>
    <ligand>
        <name>L-glutamate</name>
        <dbReference type="ChEBI" id="CHEBI:29985"/>
    </ligand>
</feature>
<feature type="binding site" evidence="1">
    <location>
        <position position="231"/>
    </location>
    <ligand>
        <name>ATP</name>
        <dbReference type="ChEBI" id="CHEBI:30616"/>
    </ligand>
</feature>
<dbReference type="EC" id="6.1.1.-" evidence="1"/>
<dbReference type="EMBL" id="CP000075">
    <property type="protein sequence ID" value="AAY35892.1"/>
    <property type="molecule type" value="Genomic_DNA"/>
</dbReference>
<dbReference type="RefSeq" id="YP_233930.1">
    <property type="nucleotide sequence ID" value="NC_007005.1"/>
</dbReference>
<dbReference type="SMR" id="Q4ZY80"/>
<dbReference type="STRING" id="205918.Psyr_0834"/>
<dbReference type="KEGG" id="psb:Psyr_0834"/>
<dbReference type="PATRIC" id="fig|205918.7.peg.859"/>
<dbReference type="eggNOG" id="COG0008">
    <property type="taxonomic scope" value="Bacteria"/>
</dbReference>
<dbReference type="HOGENOM" id="CLU_015768_0_1_6"/>
<dbReference type="OrthoDB" id="9807503at2"/>
<dbReference type="Proteomes" id="UP000000426">
    <property type="component" value="Chromosome"/>
</dbReference>
<dbReference type="GO" id="GO:0005829">
    <property type="term" value="C:cytosol"/>
    <property type="evidence" value="ECO:0007669"/>
    <property type="project" value="TreeGrafter"/>
</dbReference>
<dbReference type="GO" id="GO:0005524">
    <property type="term" value="F:ATP binding"/>
    <property type="evidence" value="ECO:0007669"/>
    <property type="project" value="UniProtKB-KW"/>
</dbReference>
<dbReference type="GO" id="GO:0004818">
    <property type="term" value="F:glutamate-tRNA ligase activity"/>
    <property type="evidence" value="ECO:0007669"/>
    <property type="project" value="TreeGrafter"/>
</dbReference>
<dbReference type="GO" id="GO:0008270">
    <property type="term" value="F:zinc ion binding"/>
    <property type="evidence" value="ECO:0007669"/>
    <property type="project" value="UniProtKB-UniRule"/>
</dbReference>
<dbReference type="GO" id="GO:0006424">
    <property type="term" value="P:glutamyl-tRNA aminoacylation"/>
    <property type="evidence" value="ECO:0007669"/>
    <property type="project" value="InterPro"/>
</dbReference>
<dbReference type="GO" id="GO:0006400">
    <property type="term" value="P:tRNA modification"/>
    <property type="evidence" value="ECO:0007669"/>
    <property type="project" value="InterPro"/>
</dbReference>
<dbReference type="FunFam" id="3.40.50.620:FF:000093">
    <property type="entry name" value="Glutamyl-Q tRNA(Asp) synthetase"/>
    <property type="match status" value="1"/>
</dbReference>
<dbReference type="Gene3D" id="3.90.800.10">
    <property type="entry name" value="Glutamyl-tRNA Synthetase, Domain 3"/>
    <property type="match status" value="1"/>
</dbReference>
<dbReference type="Gene3D" id="3.40.50.620">
    <property type="entry name" value="HUPs"/>
    <property type="match status" value="1"/>
</dbReference>
<dbReference type="HAMAP" id="MF_01428">
    <property type="entry name" value="Glu_Q_tRNA_synth"/>
    <property type="match status" value="1"/>
</dbReference>
<dbReference type="InterPro" id="IPR022380">
    <property type="entry name" value="Glu-Q_tRNA(Asp)_Synthase"/>
</dbReference>
<dbReference type="InterPro" id="IPR000924">
    <property type="entry name" value="Glu/Gln-tRNA-synth"/>
</dbReference>
<dbReference type="InterPro" id="IPR020058">
    <property type="entry name" value="Glu/Gln-tRNA-synth_Ib_cat-dom"/>
</dbReference>
<dbReference type="InterPro" id="IPR049940">
    <property type="entry name" value="GluQ/Sye"/>
</dbReference>
<dbReference type="InterPro" id="IPR014729">
    <property type="entry name" value="Rossmann-like_a/b/a_fold"/>
</dbReference>
<dbReference type="NCBIfam" id="NF004314">
    <property type="entry name" value="PRK05710.1-3"/>
    <property type="match status" value="1"/>
</dbReference>
<dbReference type="NCBIfam" id="TIGR03838">
    <property type="entry name" value="queuosine_YadB"/>
    <property type="match status" value="1"/>
</dbReference>
<dbReference type="PANTHER" id="PTHR43311">
    <property type="entry name" value="GLUTAMATE--TRNA LIGASE"/>
    <property type="match status" value="1"/>
</dbReference>
<dbReference type="PANTHER" id="PTHR43311:SF1">
    <property type="entry name" value="GLUTAMYL-Q TRNA(ASP) SYNTHETASE"/>
    <property type="match status" value="1"/>
</dbReference>
<dbReference type="Pfam" id="PF00749">
    <property type="entry name" value="tRNA-synt_1c"/>
    <property type="match status" value="1"/>
</dbReference>
<dbReference type="PRINTS" id="PR00987">
    <property type="entry name" value="TRNASYNTHGLU"/>
</dbReference>
<dbReference type="SUPFAM" id="SSF52374">
    <property type="entry name" value="Nucleotidylyl transferase"/>
    <property type="match status" value="1"/>
</dbReference>
<reference key="1">
    <citation type="journal article" date="2005" name="Proc. Natl. Acad. Sci. U.S.A.">
        <title>Comparison of the complete genome sequences of Pseudomonas syringae pv. syringae B728a and pv. tomato DC3000.</title>
        <authorList>
            <person name="Feil H."/>
            <person name="Feil W.S."/>
            <person name="Chain P."/>
            <person name="Larimer F."/>
            <person name="Dibartolo G."/>
            <person name="Copeland A."/>
            <person name="Lykidis A."/>
            <person name="Trong S."/>
            <person name="Nolan M."/>
            <person name="Goltsman E."/>
            <person name="Thiel J."/>
            <person name="Malfatti S."/>
            <person name="Loper J.E."/>
            <person name="Lapidus A."/>
            <person name="Detter J.C."/>
            <person name="Land M."/>
            <person name="Richardson P.M."/>
            <person name="Kyrpides N.C."/>
            <person name="Ivanova N."/>
            <person name="Lindow S.E."/>
        </authorList>
    </citation>
    <scope>NUCLEOTIDE SEQUENCE [LARGE SCALE GENOMIC DNA]</scope>
    <source>
        <strain>B728a</strain>
    </source>
</reference>
<proteinExistence type="inferred from homology"/>
<gene>
    <name evidence="1" type="primary">gluQ</name>
    <name type="ordered locus">Psyr_0834</name>
</gene>
<accession>Q4ZY80</accession>
<comment type="function">
    <text evidence="1">Catalyzes the tRNA-independent activation of glutamate in presence of ATP and the subsequent transfer of glutamate onto a tRNA(Asp). Glutamate is transferred on the 2-amino-5-(4,5-dihydroxy-2-cyclopenten-1-yl) moiety of the queuosine in the wobble position of the QUC anticodon.</text>
</comment>
<comment type="cofactor">
    <cofactor evidence="1">
        <name>Zn(2+)</name>
        <dbReference type="ChEBI" id="CHEBI:29105"/>
    </cofactor>
    <text evidence="1">Binds 1 zinc ion per subunit.</text>
</comment>
<comment type="similarity">
    <text evidence="1">Belongs to the class-I aminoacyl-tRNA synthetase family. GluQ subfamily.</text>
</comment>